<accession>B1ILB1</accession>
<reference key="1">
    <citation type="journal article" date="2007" name="PLoS ONE">
        <title>Analysis of the neurotoxin complex genes in Clostridium botulinum A1-A4 and B1 strains: BoNT/A3, /Ba4 and /B1 clusters are located within plasmids.</title>
        <authorList>
            <person name="Smith T.J."/>
            <person name="Hill K.K."/>
            <person name="Foley B.T."/>
            <person name="Detter J.C."/>
            <person name="Munk A.C."/>
            <person name="Bruce D.C."/>
            <person name="Doggett N.A."/>
            <person name="Smith L.A."/>
            <person name="Marks J.D."/>
            <person name="Xie G."/>
            <person name="Brettin T.S."/>
        </authorList>
    </citation>
    <scope>NUCLEOTIDE SEQUENCE [LARGE SCALE GENOMIC DNA]</scope>
    <source>
        <strain>Okra / Type B1</strain>
    </source>
</reference>
<name>HIS3_CLOBK</name>
<proteinExistence type="inferred from homology"/>
<keyword id="KW-0028">Amino-acid biosynthesis</keyword>
<keyword id="KW-0963">Cytoplasm</keyword>
<keyword id="KW-0368">Histidine biosynthesis</keyword>
<keyword id="KW-0378">Hydrolase</keyword>
<keyword id="KW-0460">Magnesium</keyword>
<keyword id="KW-0479">Metal-binding</keyword>
<keyword id="KW-0862">Zinc</keyword>
<dbReference type="EC" id="3.5.4.19" evidence="1"/>
<dbReference type="EMBL" id="CP000939">
    <property type="protein sequence ID" value="ACA44037.1"/>
    <property type="molecule type" value="Genomic_DNA"/>
</dbReference>
<dbReference type="RefSeq" id="WP_004451731.1">
    <property type="nucleotide sequence ID" value="NC_010516.1"/>
</dbReference>
<dbReference type="SMR" id="B1ILB1"/>
<dbReference type="KEGG" id="cbb:CLD_2979"/>
<dbReference type="HOGENOM" id="CLU_048577_5_3_9"/>
<dbReference type="UniPathway" id="UPA00031">
    <property type="reaction ID" value="UER00008"/>
</dbReference>
<dbReference type="Proteomes" id="UP000008541">
    <property type="component" value="Chromosome"/>
</dbReference>
<dbReference type="GO" id="GO:0005737">
    <property type="term" value="C:cytoplasm"/>
    <property type="evidence" value="ECO:0007669"/>
    <property type="project" value="UniProtKB-SubCell"/>
</dbReference>
<dbReference type="GO" id="GO:0000287">
    <property type="term" value="F:magnesium ion binding"/>
    <property type="evidence" value="ECO:0007669"/>
    <property type="project" value="UniProtKB-UniRule"/>
</dbReference>
<dbReference type="GO" id="GO:0004635">
    <property type="term" value="F:phosphoribosyl-AMP cyclohydrolase activity"/>
    <property type="evidence" value="ECO:0007669"/>
    <property type="project" value="UniProtKB-UniRule"/>
</dbReference>
<dbReference type="GO" id="GO:0008270">
    <property type="term" value="F:zinc ion binding"/>
    <property type="evidence" value="ECO:0007669"/>
    <property type="project" value="UniProtKB-UniRule"/>
</dbReference>
<dbReference type="GO" id="GO:0000105">
    <property type="term" value="P:L-histidine biosynthetic process"/>
    <property type="evidence" value="ECO:0007669"/>
    <property type="project" value="UniProtKB-UniRule"/>
</dbReference>
<dbReference type="FunFam" id="3.10.20.810:FF:000001">
    <property type="entry name" value="Histidine biosynthesis bifunctional protein HisIE"/>
    <property type="match status" value="1"/>
</dbReference>
<dbReference type="Gene3D" id="3.10.20.810">
    <property type="entry name" value="Phosphoribosyl-AMP cyclohydrolase"/>
    <property type="match status" value="1"/>
</dbReference>
<dbReference type="HAMAP" id="MF_01021">
    <property type="entry name" value="HisI"/>
    <property type="match status" value="1"/>
</dbReference>
<dbReference type="InterPro" id="IPR026660">
    <property type="entry name" value="PRA-CH"/>
</dbReference>
<dbReference type="InterPro" id="IPR002496">
    <property type="entry name" value="PRib_AMP_CycHydrolase_dom"/>
</dbReference>
<dbReference type="InterPro" id="IPR038019">
    <property type="entry name" value="PRib_AMP_CycHydrolase_sf"/>
</dbReference>
<dbReference type="NCBIfam" id="NF000768">
    <property type="entry name" value="PRK00051.1"/>
    <property type="match status" value="1"/>
</dbReference>
<dbReference type="PANTHER" id="PTHR42945">
    <property type="entry name" value="HISTIDINE BIOSYNTHESIS BIFUNCTIONAL PROTEIN"/>
    <property type="match status" value="1"/>
</dbReference>
<dbReference type="PANTHER" id="PTHR42945:SF1">
    <property type="entry name" value="HISTIDINE BIOSYNTHESIS BIFUNCTIONAL PROTEIN HIS7"/>
    <property type="match status" value="1"/>
</dbReference>
<dbReference type="Pfam" id="PF01502">
    <property type="entry name" value="PRA-CH"/>
    <property type="match status" value="1"/>
</dbReference>
<dbReference type="SUPFAM" id="SSF141734">
    <property type="entry name" value="HisI-like"/>
    <property type="match status" value="1"/>
</dbReference>
<organism>
    <name type="scientific">Clostridium botulinum (strain Okra / Type B1)</name>
    <dbReference type="NCBI Taxonomy" id="498213"/>
    <lineage>
        <taxon>Bacteria</taxon>
        <taxon>Bacillati</taxon>
        <taxon>Bacillota</taxon>
        <taxon>Clostridia</taxon>
        <taxon>Eubacteriales</taxon>
        <taxon>Clostridiaceae</taxon>
        <taxon>Clostridium</taxon>
    </lineage>
</organism>
<gene>
    <name evidence="1" type="primary">hisI</name>
    <name type="ordered locus">CLD_2979</name>
</gene>
<evidence type="ECO:0000255" key="1">
    <source>
        <dbReference type="HAMAP-Rule" id="MF_01021"/>
    </source>
</evidence>
<sequence>MNLQKISKKIDLKKGAGLIPTIIQDFYSGQVLMLAYMNKESLEKTIETNTTWFWSRSREELWNKGATSGHFQYVKSIHIDCDGDALLIKVEQLGPACHTGNRSCFYTTLI</sequence>
<comment type="function">
    <text evidence="1">Catalyzes the hydrolysis of the adenine ring of phosphoribosyl-AMP.</text>
</comment>
<comment type="catalytic activity">
    <reaction evidence="1">
        <text>1-(5-phospho-beta-D-ribosyl)-5'-AMP + H2O = 1-(5-phospho-beta-D-ribosyl)-5-[(5-phospho-beta-D-ribosylamino)methylideneamino]imidazole-4-carboxamide</text>
        <dbReference type="Rhea" id="RHEA:20049"/>
        <dbReference type="ChEBI" id="CHEBI:15377"/>
        <dbReference type="ChEBI" id="CHEBI:58435"/>
        <dbReference type="ChEBI" id="CHEBI:59457"/>
        <dbReference type="EC" id="3.5.4.19"/>
    </reaction>
</comment>
<comment type="cofactor">
    <cofactor evidence="1">
        <name>Mg(2+)</name>
        <dbReference type="ChEBI" id="CHEBI:18420"/>
    </cofactor>
    <text evidence="1">Binds 1 Mg(2+) ion per subunit.</text>
</comment>
<comment type="cofactor">
    <cofactor evidence="1">
        <name>Zn(2+)</name>
        <dbReference type="ChEBI" id="CHEBI:29105"/>
    </cofactor>
    <text evidence="1">Binds 1 zinc ion per subunit.</text>
</comment>
<comment type="pathway">
    <text evidence="1">Amino-acid biosynthesis; L-histidine biosynthesis; L-histidine from 5-phospho-alpha-D-ribose 1-diphosphate: step 3/9.</text>
</comment>
<comment type="subunit">
    <text evidence="1">Homodimer.</text>
</comment>
<comment type="subcellular location">
    <subcellularLocation>
        <location evidence="1">Cytoplasm</location>
    </subcellularLocation>
</comment>
<comment type="similarity">
    <text evidence="1">Belongs to the PRA-CH family.</text>
</comment>
<feature type="chain" id="PRO_1000135346" description="Phosphoribosyl-AMP cyclohydrolase">
    <location>
        <begin position="1"/>
        <end position="110"/>
    </location>
</feature>
<feature type="binding site" evidence="1">
    <location>
        <position position="80"/>
    </location>
    <ligand>
        <name>Mg(2+)</name>
        <dbReference type="ChEBI" id="CHEBI:18420"/>
    </ligand>
</feature>
<feature type="binding site" evidence="1">
    <location>
        <position position="81"/>
    </location>
    <ligand>
        <name>Zn(2+)</name>
        <dbReference type="ChEBI" id="CHEBI:29105"/>
        <note>ligand shared between dimeric partners</note>
    </ligand>
</feature>
<feature type="binding site" evidence="1">
    <location>
        <position position="82"/>
    </location>
    <ligand>
        <name>Mg(2+)</name>
        <dbReference type="ChEBI" id="CHEBI:18420"/>
    </ligand>
</feature>
<feature type="binding site" evidence="1">
    <location>
        <position position="84"/>
    </location>
    <ligand>
        <name>Mg(2+)</name>
        <dbReference type="ChEBI" id="CHEBI:18420"/>
    </ligand>
</feature>
<feature type="binding site" evidence="1">
    <location>
        <position position="97"/>
    </location>
    <ligand>
        <name>Zn(2+)</name>
        <dbReference type="ChEBI" id="CHEBI:29105"/>
        <note>ligand shared between dimeric partners</note>
    </ligand>
</feature>
<feature type="binding site" evidence="1">
    <location>
        <position position="104"/>
    </location>
    <ligand>
        <name>Zn(2+)</name>
        <dbReference type="ChEBI" id="CHEBI:29105"/>
        <note>ligand shared between dimeric partners</note>
    </ligand>
</feature>
<protein>
    <recommendedName>
        <fullName evidence="1">Phosphoribosyl-AMP cyclohydrolase</fullName>
        <shortName evidence="1">PRA-CH</shortName>
        <ecNumber evidence="1">3.5.4.19</ecNumber>
    </recommendedName>
</protein>